<organism>
    <name type="scientific">Vitis vinifera</name>
    <name type="common">Grape</name>
    <dbReference type="NCBI Taxonomy" id="29760"/>
    <lineage>
        <taxon>Eukaryota</taxon>
        <taxon>Viridiplantae</taxon>
        <taxon>Streptophyta</taxon>
        <taxon>Embryophyta</taxon>
        <taxon>Tracheophyta</taxon>
        <taxon>Spermatophyta</taxon>
        <taxon>Magnoliopsida</taxon>
        <taxon>eudicotyledons</taxon>
        <taxon>Gunneridae</taxon>
        <taxon>Pentapetalae</taxon>
        <taxon>rosids</taxon>
        <taxon>Vitales</taxon>
        <taxon>Vitaceae</taxon>
        <taxon>Viteae</taxon>
        <taxon>Vitis</taxon>
    </lineage>
</organism>
<sequence>MASVEEFRNAQRAKGPATILAIGTATPDHCVYQSDYADYYFRVTKSEHMTELKKKFNRICDKSMIKKRYIHLTEEMLEEHPNIGAYMAPSLNIRQEIITAEVPRLGRDAALKALKEWGQPKSKITHLVFCTTSGVEMPGADYKLANLLGLETSVRRVMLYHQGCYAGGTVLRTAKDLAENNAGARVLVVCSEITVVTFRGPSEDALDSLVGQALFGDGSSAVIVGSDPDVSIERPLFQLVSAAQTFIPNSAGAIAGNLREVGLTFHLWPNVPTLISENIEKCLTQAFDPLGISDWNSLFWIAHPGGPAILDAVEAKLNLEKKKLEATRHVLSEYGNMSSACVLFILDEMRKKSLKGENATTGEGLDWGVLFGFGPGLTIETVVLHSIPTVTN</sequence>
<proteinExistence type="evidence at transcript level"/>
<keyword id="KW-0012">Acyltransferase</keyword>
<keyword id="KW-0963">Cytoplasm</keyword>
<keyword id="KW-0611">Plant defense</keyword>
<keyword id="KW-0346">Stress response</keyword>
<keyword id="KW-0808">Transferase</keyword>
<name>THS7_VITVI</name>
<accession>A2ICC6</accession>
<gene>
    <name type="primary">STS</name>
    <name type="ORF">GSVIVT00009216001</name>
    <name type="ORF">LOC100242994</name>
</gene>
<dbReference type="EC" id="2.3.1.95"/>
<dbReference type="EMBL" id="EF192465">
    <property type="protein sequence ID" value="ABM67587.1"/>
    <property type="molecule type" value="mRNA"/>
</dbReference>
<dbReference type="RefSeq" id="NP_001267934.1">
    <property type="nucleotide sequence ID" value="NM_001281005.1"/>
</dbReference>
<dbReference type="SMR" id="A2ICC6"/>
<dbReference type="PaxDb" id="29760-VIT_16s0100g01200.t01"/>
<dbReference type="GeneID" id="100242994"/>
<dbReference type="KEGG" id="vvi:100242994"/>
<dbReference type="eggNOG" id="ENOG502QRSY">
    <property type="taxonomic scope" value="Eukaryota"/>
</dbReference>
<dbReference type="HOGENOM" id="CLU_034992_2_0_1"/>
<dbReference type="OrthoDB" id="1056237at2759"/>
<dbReference type="UniPathway" id="UPA00372">
    <property type="reaction ID" value="UER00548"/>
</dbReference>
<dbReference type="ExpressionAtlas" id="A2ICC6">
    <property type="expression patterns" value="baseline and differential"/>
</dbReference>
<dbReference type="GO" id="GO:0005737">
    <property type="term" value="C:cytoplasm"/>
    <property type="evidence" value="ECO:0007669"/>
    <property type="project" value="UniProtKB-SubCell"/>
</dbReference>
<dbReference type="GO" id="GO:0050350">
    <property type="term" value="F:trihydroxystilbene synthase activity"/>
    <property type="evidence" value="ECO:0007669"/>
    <property type="project" value="UniProtKB-EC"/>
</dbReference>
<dbReference type="GO" id="GO:0009058">
    <property type="term" value="P:biosynthetic process"/>
    <property type="evidence" value="ECO:0007669"/>
    <property type="project" value="InterPro"/>
</dbReference>
<dbReference type="GO" id="GO:0006952">
    <property type="term" value="P:defense response"/>
    <property type="evidence" value="ECO:0007669"/>
    <property type="project" value="UniProtKB-KW"/>
</dbReference>
<dbReference type="CDD" id="cd00831">
    <property type="entry name" value="CHS_like"/>
    <property type="match status" value="1"/>
</dbReference>
<dbReference type="FunFam" id="3.40.47.10:FF:000014">
    <property type="entry name" value="Chalcone synthase 1"/>
    <property type="match status" value="1"/>
</dbReference>
<dbReference type="FunFam" id="3.40.47.10:FF:000025">
    <property type="entry name" value="Chalcone synthase 2"/>
    <property type="match status" value="1"/>
</dbReference>
<dbReference type="Gene3D" id="3.40.47.10">
    <property type="match status" value="2"/>
</dbReference>
<dbReference type="InterPro" id="IPR012328">
    <property type="entry name" value="Chalcone/stilbene_synt_C"/>
</dbReference>
<dbReference type="InterPro" id="IPR001099">
    <property type="entry name" value="Chalcone/stilbene_synt_N"/>
</dbReference>
<dbReference type="InterPro" id="IPR018088">
    <property type="entry name" value="Chalcone/stilbene_synthase_AS"/>
</dbReference>
<dbReference type="InterPro" id="IPR011141">
    <property type="entry name" value="Polyketide_synthase_type-III"/>
</dbReference>
<dbReference type="InterPro" id="IPR016039">
    <property type="entry name" value="Thiolase-like"/>
</dbReference>
<dbReference type="PANTHER" id="PTHR11877:SF14">
    <property type="entry name" value="CHALCONE SYNTHASE"/>
    <property type="match status" value="1"/>
</dbReference>
<dbReference type="PANTHER" id="PTHR11877">
    <property type="entry name" value="HYDROXYMETHYLGLUTARYL-COA SYNTHASE"/>
    <property type="match status" value="1"/>
</dbReference>
<dbReference type="Pfam" id="PF02797">
    <property type="entry name" value="Chal_sti_synt_C"/>
    <property type="match status" value="1"/>
</dbReference>
<dbReference type="Pfam" id="PF00195">
    <property type="entry name" value="Chal_sti_synt_N"/>
    <property type="match status" value="1"/>
</dbReference>
<dbReference type="PIRSF" id="PIRSF000451">
    <property type="entry name" value="PKS_III"/>
    <property type="match status" value="1"/>
</dbReference>
<dbReference type="SUPFAM" id="SSF53901">
    <property type="entry name" value="Thiolase-like"/>
    <property type="match status" value="2"/>
</dbReference>
<dbReference type="PROSITE" id="PS00441">
    <property type="entry name" value="CHALCONE_SYNTH"/>
    <property type="match status" value="1"/>
</dbReference>
<feature type="chain" id="PRO_0000313089" description="Stilbene synthase 6">
    <location>
        <begin position="1"/>
        <end position="392"/>
    </location>
</feature>
<feature type="active site" evidence="2">
    <location>
        <position position="164"/>
    </location>
</feature>
<feature type="binding site" evidence="1">
    <location>
        <begin position="55"/>
        <end position="58"/>
    </location>
    <ligand>
        <name>substrate</name>
    </ligand>
</feature>
<feature type="binding site" evidence="1">
    <location>
        <position position="267"/>
    </location>
    <ligand>
        <name>substrate</name>
    </ligand>
</feature>
<feature type="binding site" evidence="1">
    <location>
        <begin position="305"/>
        <end position="307"/>
    </location>
    <ligand>
        <name>substrate</name>
    </ligand>
</feature>
<reference key="1">
    <citation type="submission" date="2006-12" db="EMBL/GenBank/DDBJ databases">
        <title>Cloning and functional expression of flavonoid genes from Vitis vinifera.</title>
        <authorList>
            <person name="Pfeiffer J."/>
            <person name="Fischer T.C."/>
            <person name="Forkmann G."/>
        </authorList>
    </citation>
    <scope>NUCLEOTIDE SEQUENCE [MRNA]</scope>
    <source>
        <strain>cv. Spaetburgunder</strain>
        <tissue>Leaf</tissue>
    </source>
</reference>
<reference key="2">
    <citation type="journal article" date="2007" name="Nature">
        <title>The grapevine genome sequence suggests ancestral hexaploidization in major angiosperm phyla.</title>
        <authorList>
            <person name="Jaillon O."/>
            <person name="Aury J.-M."/>
            <person name="Noel B."/>
            <person name="Policriti A."/>
            <person name="Clepet C."/>
            <person name="Casagrande A."/>
            <person name="Choisne N."/>
            <person name="Aubourg S."/>
            <person name="Vitulo N."/>
            <person name="Jubin C."/>
            <person name="Vezzi A."/>
            <person name="Legeai F."/>
            <person name="Hugueney P."/>
            <person name="Dasilva C."/>
            <person name="Horner D."/>
            <person name="Mica E."/>
            <person name="Jublot D."/>
            <person name="Poulain J."/>
            <person name="Bruyere C."/>
            <person name="Billault A."/>
            <person name="Segurens B."/>
            <person name="Gouyvenoux M."/>
            <person name="Ugarte E."/>
            <person name="Cattonaro F."/>
            <person name="Anthouard V."/>
            <person name="Vico V."/>
            <person name="Del Fabbro C."/>
            <person name="Alaux M."/>
            <person name="Di Gaspero G."/>
            <person name="Dumas V."/>
            <person name="Felice N."/>
            <person name="Paillard S."/>
            <person name="Juman I."/>
            <person name="Moroldo M."/>
            <person name="Scalabrin S."/>
            <person name="Canaguier A."/>
            <person name="Le Clainche I."/>
            <person name="Malacrida G."/>
            <person name="Durand E."/>
            <person name="Pesole G."/>
            <person name="Laucou V."/>
            <person name="Chatelet P."/>
            <person name="Merdinoglu D."/>
            <person name="Delledonne M."/>
            <person name="Pezzotti M."/>
            <person name="Lecharny A."/>
            <person name="Scarpelli C."/>
            <person name="Artiguenave F."/>
            <person name="Pe M.E."/>
            <person name="Valle G."/>
            <person name="Morgante M."/>
            <person name="Caboche M."/>
            <person name="Adam-Blondon A.-F."/>
            <person name="Weissenbach J."/>
            <person name="Quetier F."/>
            <person name="Wincker P."/>
        </authorList>
    </citation>
    <scope>NUCLEOTIDE SEQUENCE [LARGE SCALE GENOMIC DNA]</scope>
    <source>
        <strain>cv. Pinot noir / PN40024</strain>
    </source>
</reference>
<evidence type="ECO:0000250" key="1"/>
<evidence type="ECO:0000255" key="2">
    <source>
        <dbReference type="PROSITE-ProRule" id="PRU10023"/>
    </source>
</evidence>
<evidence type="ECO:0000305" key="3"/>
<protein>
    <recommendedName>
        <fullName>Stilbene synthase 6</fullName>
        <ecNumber>2.3.1.95</ecNumber>
    </recommendedName>
    <alternativeName>
        <fullName>Resveratrol synthase 6</fullName>
    </alternativeName>
    <alternativeName>
        <fullName>Trihydroxystilbene synthase 6</fullName>
        <shortName>StSy 6</shortName>
    </alternativeName>
</protein>
<comment type="function">
    <text evidence="1">Mediates resistance to pathogens which are sensitive to stilbenes.</text>
</comment>
<comment type="catalytic activity">
    <reaction>
        <text>4-coumaroyl-CoA + 3 malonyl-CoA + 3 H(+) = trans-resveratrol + 4 CO2 + 4 CoA</text>
        <dbReference type="Rhea" id="RHEA:11936"/>
        <dbReference type="ChEBI" id="CHEBI:15378"/>
        <dbReference type="ChEBI" id="CHEBI:16526"/>
        <dbReference type="ChEBI" id="CHEBI:45713"/>
        <dbReference type="ChEBI" id="CHEBI:57287"/>
        <dbReference type="ChEBI" id="CHEBI:57355"/>
        <dbReference type="ChEBI" id="CHEBI:57384"/>
        <dbReference type="EC" id="2.3.1.95"/>
    </reaction>
</comment>
<comment type="pathway">
    <text>Phytoalexin biosynthesis; 3,4',5-trihydroxystilbene biosynthesis; 3,4',5-trihydroxystilbene from trans-4-coumarate: step 2/2.</text>
</comment>
<comment type="subunit">
    <text evidence="1">Homodimer.</text>
</comment>
<comment type="subcellular location">
    <subcellularLocation>
        <location evidence="1">Cytoplasm</location>
    </subcellularLocation>
</comment>
<comment type="similarity">
    <text evidence="3">Belongs to the thiolase-like superfamily. Chalcone/stilbene synthases family.</text>
</comment>